<name>CADF1_PLAFX</name>
<evidence type="ECO:0000250" key="1">
    <source>
        <dbReference type="UniProtKB" id="Q03048"/>
    </source>
</evidence>
<evidence type="ECO:0000255" key="2"/>
<evidence type="ECO:0000255" key="3">
    <source>
        <dbReference type="PROSITE-ProRule" id="PRU00599"/>
    </source>
</evidence>
<evidence type="ECO:0000269" key="4">
    <source>
    </source>
</evidence>
<evidence type="ECO:0000303" key="5">
    <source>
    </source>
</evidence>
<evidence type="ECO:0000305" key="6"/>
<evidence type="ECO:0007829" key="7">
    <source>
        <dbReference type="PDB" id="3Q2B"/>
    </source>
</evidence>
<organism>
    <name type="scientific">Plasmodium falciparum (isolate HB3)</name>
    <dbReference type="NCBI Taxonomy" id="137071"/>
    <lineage>
        <taxon>Eukaryota</taxon>
        <taxon>Sar</taxon>
        <taxon>Alveolata</taxon>
        <taxon>Apicomplexa</taxon>
        <taxon>Aconoidasida</taxon>
        <taxon>Haemosporida</taxon>
        <taxon>Plasmodiidae</taxon>
        <taxon>Plasmodium</taxon>
        <taxon>Plasmodium (Laverania)</taxon>
    </lineage>
</organism>
<comment type="function">
    <text evidence="4">Not involved in actin polymerisation, instead functions to stimulate nucleotide exchange on monomeric actin and influence turnover of the small amount of cytosolic actin microfilaments. Essential for erythrocytic schizogony.</text>
</comment>
<comment type="subunit">
    <text evidence="4">Interacts with monomeric actin, does not bind to actin polymers.</text>
</comment>
<comment type="subcellular location">
    <subcellularLocation>
        <location evidence="1">Cytoplasm</location>
    </subcellularLocation>
    <subcellularLocation>
        <location evidence="1">Cytoplasm</location>
        <location evidence="1">Cytoskeleton</location>
    </subcellularLocation>
</comment>
<comment type="developmental stage">
    <text evidence="4">Expressed throughout the life cycle, in oocyst sporozoites that invade the mosquito salivary glands, salivary gland sporozoites infectious to the mammalian liver, and schizonts/merozoites that invade erythrocytes.</text>
</comment>
<comment type="similarity">
    <text evidence="2">Belongs to the actin-binding proteins ADF family.</text>
</comment>
<reference evidence="6" key="1">
    <citation type="submission" date="2006-03" db="EMBL/GenBank/DDBJ databases">
        <title>The genome sequence of the Plasmodium falciparum HB3.</title>
        <authorList>
            <consortium name="The Broad Institute Genome Sequencing Platform"/>
            <person name="Birren B."/>
            <person name="Lander E."/>
            <person name="Galagan J."/>
            <person name="Nusbaum C."/>
            <person name="Devon K."/>
            <person name="Henn M."/>
            <person name="Jaffe D."/>
            <person name="Butler J."/>
            <person name="Alvarez P."/>
            <person name="Gnerre S."/>
            <person name="Grabherr M."/>
            <person name="Kleber M."/>
            <person name="Mauceli E."/>
            <person name="Brockman W."/>
            <person name="MacCallum I.A."/>
            <person name="Rounsley S."/>
            <person name="Young S."/>
            <person name="LaButti K."/>
            <person name="Pushparaj V."/>
            <person name="DeCaprio D."/>
            <person name="Crawford M."/>
            <person name="Koehrsen M."/>
            <person name="Engels R."/>
            <person name="Montgomery P."/>
            <person name="Pearson M."/>
            <person name="Howarth C."/>
            <person name="Larson L."/>
            <person name="Luoma S."/>
            <person name="White J."/>
            <person name="Kodira C."/>
            <person name="Zeng Q."/>
            <person name="Oleary S."/>
            <person name="Yandava C."/>
            <person name="Alvarado L."/>
            <person name="Wirth D."/>
            <person name="Volkman S."/>
            <person name="Hartl D."/>
        </authorList>
    </citation>
    <scope>NUCLEOTIDE SEQUENCE [LARGE SCALE GENOMIC DNA]</scope>
</reference>
<reference evidence="6" key="2">
    <citation type="journal article" date="2005" name="Mol. Biol. Cell">
        <title>A Plasmodium actin-depolymerizing factor that binds exclusively to actin monomers.</title>
        <authorList>
            <person name="Schueler H."/>
            <person name="Mueller A.-K."/>
            <person name="Matuschewski K."/>
        </authorList>
    </citation>
    <scope>FUNCTION</scope>
    <scope>INTERACTION WITH ACTIN</scope>
    <scope>DEVELOPMENTAL STAGE</scope>
</reference>
<accession>P86292</accession>
<dbReference type="EMBL" id="AANS01000859">
    <property type="status" value="NOT_ANNOTATED_CDS"/>
    <property type="molecule type" value="Genomic_DNA"/>
</dbReference>
<dbReference type="PDB" id="3Q2B">
    <property type="method" value="X-ray"/>
    <property type="resolution" value="1.60 A"/>
    <property type="chains" value="A=1-122"/>
</dbReference>
<dbReference type="PDBsum" id="3Q2B"/>
<dbReference type="SMR" id="P86292"/>
<dbReference type="VEuPathDB" id="PlasmoDB:PfHB3_050008600"/>
<dbReference type="OMA" id="WIIFVIE"/>
<dbReference type="EvolutionaryTrace" id="P86292"/>
<dbReference type="GO" id="GO:0015629">
    <property type="term" value="C:actin cytoskeleton"/>
    <property type="evidence" value="ECO:0000250"/>
    <property type="project" value="UniProtKB"/>
</dbReference>
<dbReference type="GO" id="GO:0005737">
    <property type="term" value="C:cytoplasm"/>
    <property type="evidence" value="ECO:0007669"/>
    <property type="project" value="UniProtKB-SubCell"/>
</dbReference>
<dbReference type="GO" id="GO:0003785">
    <property type="term" value="F:actin monomer binding"/>
    <property type="evidence" value="ECO:0000315"/>
    <property type="project" value="UniProtKB"/>
</dbReference>
<dbReference type="GO" id="GO:0030036">
    <property type="term" value="P:actin cytoskeleton organization"/>
    <property type="evidence" value="ECO:0000315"/>
    <property type="project" value="UniProtKB"/>
</dbReference>
<dbReference type="GO" id="GO:0030042">
    <property type="term" value="P:actin filament depolymerization"/>
    <property type="evidence" value="ECO:0007669"/>
    <property type="project" value="InterPro"/>
</dbReference>
<dbReference type="GO" id="GO:0060327">
    <property type="term" value="P:cytoplasmic actin-based contraction involved in cell motility"/>
    <property type="evidence" value="ECO:0000315"/>
    <property type="project" value="UniProtKB"/>
</dbReference>
<dbReference type="FunFam" id="3.40.20.10:FF:000046">
    <property type="entry name" value="Cofilin/actin-depolymerizing factor like 1"/>
    <property type="match status" value="1"/>
</dbReference>
<dbReference type="Gene3D" id="3.40.20.10">
    <property type="entry name" value="Severin"/>
    <property type="match status" value="1"/>
</dbReference>
<dbReference type="InterPro" id="IPR002108">
    <property type="entry name" value="ADF-H"/>
</dbReference>
<dbReference type="InterPro" id="IPR029006">
    <property type="entry name" value="ADF-H/Gelsolin-like_dom_sf"/>
</dbReference>
<dbReference type="InterPro" id="IPR017904">
    <property type="entry name" value="ADF/Cofilin"/>
</dbReference>
<dbReference type="PANTHER" id="PTHR11913">
    <property type="entry name" value="COFILIN-RELATED"/>
    <property type="match status" value="1"/>
</dbReference>
<dbReference type="Pfam" id="PF00241">
    <property type="entry name" value="Cofilin_ADF"/>
    <property type="match status" value="1"/>
</dbReference>
<dbReference type="SMART" id="SM00102">
    <property type="entry name" value="ADF"/>
    <property type="match status" value="1"/>
</dbReference>
<dbReference type="SUPFAM" id="SSF55753">
    <property type="entry name" value="Actin depolymerizing proteins"/>
    <property type="match status" value="1"/>
</dbReference>
<dbReference type="PROSITE" id="PS51263">
    <property type="entry name" value="ADF_H"/>
    <property type="match status" value="1"/>
</dbReference>
<sequence length="122" mass="13741">MISGIRVNDNCVTEFNNMKIRKTCGWIIFVIQNCEIIIHSKGASTTLTELVQSIDKNNEIQCAYVVFDAVSKIHFFMYARESSNSRDRMTYASSKQAILKKIEGVNVLTSVIESAQDVADLK</sequence>
<keyword id="KW-0002">3D-structure</keyword>
<keyword id="KW-0009">Actin-binding</keyword>
<keyword id="KW-0963">Cytoplasm</keyword>
<keyword id="KW-0206">Cytoskeleton</keyword>
<proteinExistence type="evidence at protein level"/>
<protein>
    <recommendedName>
        <fullName evidence="5">Cofilin/actin-depolymerizing factor homolog 1</fullName>
        <shortName evidence="5">PfADF1</shortName>
    </recommendedName>
</protein>
<feature type="chain" id="PRO_0000377705" description="Cofilin/actin-depolymerizing factor homolog 1">
    <location>
        <begin position="1"/>
        <end position="122"/>
    </location>
</feature>
<feature type="domain" description="ADF-H" evidence="3">
    <location>
        <begin position="4"/>
        <end position="122"/>
    </location>
</feature>
<feature type="helix" evidence="7">
    <location>
        <begin position="9"/>
        <end position="21"/>
    </location>
</feature>
<feature type="strand" evidence="7">
    <location>
        <begin position="23"/>
        <end position="32"/>
    </location>
</feature>
<feature type="strand" evidence="7">
    <location>
        <begin position="35"/>
        <end position="43"/>
    </location>
</feature>
<feature type="helix" evidence="7">
    <location>
        <begin position="47"/>
        <end position="56"/>
    </location>
</feature>
<feature type="strand" evidence="7">
    <location>
        <begin position="61"/>
        <end position="68"/>
    </location>
</feature>
<feature type="strand" evidence="7">
    <location>
        <begin position="73"/>
        <end position="79"/>
    </location>
</feature>
<feature type="helix" evidence="7">
    <location>
        <begin position="85"/>
        <end position="99"/>
    </location>
</feature>
<feature type="strand" evidence="7">
    <location>
        <begin position="105"/>
        <end position="107"/>
    </location>
</feature>
<feature type="helix" evidence="7">
    <location>
        <begin position="115"/>
        <end position="118"/>
    </location>
</feature>